<reference key="1">
    <citation type="journal article" date="1988" name="J. Gen. Virol.">
        <title>Typing hepatitis B virus by homology in nucleotide sequence: comparison of surface antigen subtypes.</title>
        <authorList>
            <person name="Okamoto H."/>
            <person name="Tsuda F."/>
            <person name="Sakugawa H."/>
            <person name="Sastrosoewignjo R.I."/>
            <person name="Imai M."/>
            <person name="Miyakawa Y."/>
            <person name="Mayumi M."/>
        </authorList>
    </citation>
    <scope>NUCLEOTIDE SEQUENCE [GENOMIC DNA]</scope>
</reference>
<feature type="signal peptide" evidence="2">
    <location>
        <begin position="1"/>
        <end position="19"/>
    </location>
</feature>
<feature type="chain" id="PRO_0000324707" description="External core antigen" evidence="2">
    <location>
        <begin position="20"/>
        <end position="212"/>
    </location>
</feature>
<feature type="propeptide" id="PRO_0000324708" evidence="1">
    <location>
        <begin position="184"/>
        <end position="212"/>
    </location>
</feature>
<feature type="repeat" description="1; half-length">
    <location>
        <begin position="184"/>
        <end position="190"/>
    </location>
</feature>
<feature type="repeat" description="2">
    <location>
        <begin position="191"/>
        <end position="198"/>
    </location>
</feature>
<feature type="repeat" description="3">
    <location>
        <begin position="199"/>
        <end position="206"/>
    </location>
</feature>
<feature type="region of interest" description="HBEAG" evidence="2">
    <location>
        <begin position="25"/>
        <end position="27"/>
    </location>
</feature>
<feature type="region of interest" description="Disordered" evidence="3">
    <location>
        <begin position="165"/>
        <end position="212"/>
    </location>
</feature>
<feature type="region of interest" description="3 X 8 AA repeats of S-P-R-R-R-R-S-Q">
    <location>
        <begin position="184"/>
        <end position="206"/>
    </location>
</feature>
<feature type="compositionally biased region" description="Basic residues" evidence="3">
    <location>
        <begin position="178"/>
        <end position="205"/>
    </location>
</feature>
<feature type="site" description="Cleavage; by host" evidence="2">
    <location>
        <begin position="183"/>
        <end position="184"/>
    </location>
</feature>
<feature type="disulfide bond" description="Interchain" evidence="2">
    <location>
        <position position="77"/>
    </location>
</feature>
<feature type="disulfide bond" description="Interchain" evidence="2">
    <location>
        <position position="90"/>
    </location>
</feature>
<proteinExistence type="inferred from homology"/>
<evidence type="ECO:0000250" key="1"/>
<evidence type="ECO:0000255" key="2">
    <source>
        <dbReference type="HAMAP-Rule" id="MF_04076"/>
    </source>
</evidence>
<evidence type="ECO:0000256" key="3">
    <source>
        <dbReference type="SAM" id="MobiDB-lite"/>
    </source>
</evidence>
<protein>
    <recommendedName>
        <fullName evidence="2">External core antigen</fullName>
    </recommendedName>
    <alternativeName>
        <fullName evidence="2">HBeAg</fullName>
    </alternativeName>
    <alternativeName>
        <fullName evidence="2">Precore protein</fullName>
    </alternativeName>
    <alternativeName>
        <fullName evidence="2">p25</fullName>
    </alternativeName>
</protein>
<name>HBEAG_HBVB4</name>
<organismHost>
    <name type="scientific">Homo sapiens</name>
    <name type="common">Human</name>
    <dbReference type="NCBI Taxonomy" id="9606"/>
</organismHost>
<organismHost>
    <name type="scientific">Pan troglodytes</name>
    <name type="common">Chimpanzee</name>
    <dbReference type="NCBI Taxonomy" id="9598"/>
</organismHost>
<organism>
    <name type="scientific">Hepatitis B virus genotype B/C subtype adw (isolate Okinawa/pODW282/1998)</name>
    <name type="common">HBV-B</name>
    <dbReference type="NCBI Taxonomy" id="10415"/>
    <lineage>
        <taxon>Viruses</taxon>
        <taxon>Riboviria</taxon>
        <taxon>Pararnavirae</taxon>
        <taxon>Artverviricota</taxon>
        <taxon>Revtraviricetes</taxon>
        <taxon>Blubervirales</taxon>
        <taxon>Hepadnaviridae</taxon>
        <taxon>Orthohepadnavirus</taxon>
        <taxon>Hepatitis B virus</taxon>
    </lineage>
</organism>
<comment type="function">
    <text evidence="2">May regulate immune response to the intracellular capsid in acting as a T-cell tolerogen, by having an immunoregulatory effect which prevents destruction of infected cells by cytotoxic T-cells. This immune regulation may predispose to chronicity during perinatal infections and prevent severe liver injury during adult infections.</text>
</comment>
<comment type="subunit">
    <text evidence="2">Homodimerizes.</text>
</comment>
<comment type="subcellular location">
    <subcellularLocation>
        <location evidence="2">Secreted</location>
    </subcellularLocation>
    <subcellularLocation>
        <location evidence="2">Host nucleus</location>
    </subcellularLocation>
</comment>
<comment type="alternative products">
    <event type="alternative initiation"/>
    <isoform>
        <id>P0C6G9-1</id>
        <name>External core antigen</name>
        <sequence type="displayed"/>
    </isoform>
    <isoform>
        <id>P17392-1</id>
        <name>Capsid protein</name>
        <sequence type="external"/>
    </isoform>
</comment>
<comment type="PTM">
    <text evidence="2">Phosphorylated.</text>
</comment>
<comment type="PTM">
    <text evidence="2">Cleaved by host furin.</text>
</comment>
<comment type="similarity">
    <text evidence="2">Belongs to the orthohepadnavirus precore antigen family.</text>
</comment>
<accession>P0C6G9</accession>
<gene>
    <name evidence="2" type="primary">C</name>
</gene>
<keyword id="KW-0024">Alternative initiation</keyword>
<keyword id="KW-1015">Disulfide bond</keyword>
<keyword id="KW-1048">Host nucleus</keyword>
<keyword id="KW-0945">Host-virus interaction</keyword>
<keyword id="KW-0677">Repeat</keyword>
<keyword id="KW-0964">Secreted</keyword>
<keyword id="KW-0732">Signal</keyword>
<keyword id="KW-0899">Viral immunoevasion</keyword>
<sequence>MQLFHLCLIISCSCPTVQASKLCLGWLWGMDIDPYKEFGASVELLSFLPSDFFPSVRDLLDTASALYREALESPEHCSPHHTALRQAILCWGELMNLATWVGSNLEDPASRELVVSYVNVNMGLKIRQLLWFHISCLTFGRETVLEYLVSFGVWIRTPPAYRPPNAPILSTLPETTVVRRRGRSPRRRTPSPRRRRSQSPRRRRSQSRESQC</sequence>
<dbReference type="EMBL" id="D00330">
    <property type="status" value="NOT_ANNOTATED_CDS"/>
    <property type="molecule type" value="Genomic_DNA"/>
</dbReference>
<dbReference type="SMR" id="P0C6G9"/>
<dbReference type="Proteomes" id="UP000007916">
    <property type="component" value="Genome"/>
</dbReference>
<dbReference type="GO" id="GO:0005576">
    <property type="term" value="C:extracellular region"/>
    <property type="evidence" value="ECO:0007669"/>
    <property type="project" value="UniProtKB-SubCell"/>
</dbReference>
<dbReference type="GO" id="GO:0043657">
    <property type="term" value="C:host cell"/>
    <property type="evidence" value="ECO:0007669"/>
    <property type="project" value="GOC"/>
</dbReference>
<dbReference type="GO" id="GO:0030430">
    <property type="term" value="C:host cell cytoplasm"/>
    <property type="evidence" value="ECO:0007669"/>
    <property type="project" value="UniProtKB-UniRule"/>
</dbReference>
<dbReference type="GO" id="GO:0042025">
    <property type="term" value="C:host cell nucleus"/>
    <property type="evidence" value="ECO:0007669"/>
    <property type="project" value="UniProtKB-SubCell"/>
</dbReference>
<dbReference type="GO" id="GO:0039619">
    <property type="term" value="C:T=4 icosahedral viral capsid"/>
    <property type="evidence" value="ECO:0007669"/>
    <property type="project" value="UniProtKB-UniRule"/>
</dbReference>
<dbReference type="GO" id="GO:0003677">
    <property type="term" value="F:DNA binding"/>
    <property type="evidence" value="ECO:0007669"/>
    <property type="project" value="UniProtKB-UniRule"/>
</dbReference>
<dbReference type="GO" id="GO:0003723">
    <property type="term" value="F:RNA binding"/>
    <property type="evidence" value="ECO:0007669"/>
    <property type="project" value="UniProtKB-UniRule"/>
</dbReference>
<dbReference type="GO" id="GO:0005198">
    <property type="term" value="F:structural molecule activity"/>
    <property type="evidence" value="ECO:0007669"/>
    <property type="project" value="UniProtKB-UniRule"/>
</dbReference>
<dbReference type="GO" id="GO:0075521">
    <property type="term" value="P:microtubule-dependent intracellular transport of viral material towards nucleus"/>
    <property type="evidence" value="ECO:0007669"/>
    <property type="project" value="UniProtKB-UniRule"/>
</dbReference>
<dbReference type="GO" id="GO:0046718">
    <property type="term" value="P:symbiont entry into host cell"/>
    <property type="evidence" value="ECO:0007669"/>
    <property type="project" value="UniProtKB-UniRule"/>
</dbReference>
<dbReference type="GO" id="GO:0075732">
    <property type="term" value="P:viral penetration into host nucleus"/>
    <property type="evidence" value="ECO:0007669"/>
    <property type="project" value="UniProtKB-UniRule"/>
</dbReference>
<dbReference type="FunFam" id="1.10.4090.10:FF:000001">
    <property type="entry name" value="Capsid protein"/>
    <property type="match status" value="1"/>
</dbReference>
<dbReference type="Gene3D" id="1.10.4090.10">
    <property type="entry name" value="Viral capsid, core domain supefamily, Hepatitis B virus"/>
    <property type="match status" value="1"/>
</dbReference>
<dbReference type="HAMAP" id="MF_04076">
    <property type="entry name" value="HBV_HBEAG"/>
    <property type="match status" value="1"/>
</dbReference>
<dbReference type="InterPro" id="IPR013195">
    <property type="entry name" value="Hepatitis_B_virus_capsid_N"/>
</dbReference>
<dbReference type="InterPro" id="IPR002006">
    <property type="entry name" value="Hepatitis_core"/>
</dbReference>
<dbReference type="InterPro" id="IPR036459">
    <property type="entry name" value="Viral_capsid_core_dom_sf_HBV"/>
</dbReference>
<dbReference type="Pfam" id="PF08290">
    <property type="entry name" value="Hep_core_N"/>
    <property type="match status" value="1"/>
</dbReference>
<dbReference type="Pfam" id="PF00906">
    <property type="entry name" value="Hepatitis_core"/>
    <property type="match status" value="3"/>
</dbReference>
<dbReference type="SUPFAM" id="SSF47852">
    <property type="entry name" value="Hepatitis B viral capsid (hbcag)"/>
    <property type="match status" value="1"/>
</dbReference>